<sequence>MAIVDVVVIPVGTDGPSVSKYIAEIQTKLKEYKAQGKIDYQLTPMNTLIEGDLKDLFEVVQAIHELPFDKGLSRVCTNIRIDDRRDKSRNMNEKVKAVEKYLNDGGN</sequence>
<proteinExistence type="inferred from homology"/>
<evidence type="ECO:0000305" key="1"/>
<organism>
    <name type="scientific">Staphylococcus xylosus</name>
    <dbReference type="NCBI Taxonomy" id="1288"/>
    <lineage>
        <taxon>Bacteria</taxon>
        <taxon>Bacillati</taxon>
        <taxon>Bacillota</taxon>
        <taxon>Bacilli</taxon>
        <taxon>Bacillales</taxon>
        <taxon>Staphylococcaceae</taxon>
        <taxon>Staphylococcus</taxon>
    </lineage>
</organism>
<feature type="chain" id="PRO_0000147627" description="UPF0045 protein in glkA 3'region">
    <location>
        <begin position="1"/>
        <end position="107"/>
    </location>
</feature>
<reference key="1">
    <citation type="journal article" date="1995" name="J. Bacteriol.">
        <title>Glucose kinase-dependent catabolite repression in Staphylococcus xylosus.</title>
        <authorList>
            <person name="Wagner E."/>
            <person name="Marcandier S."/>
            <person name="Egeter O."/>
            <person name="Deutscher J."/>
            <person name="Goetz F."/>
            <person name="Brueckner R."/>
        </authorList>
    </citation>
    <scope>NUCLEOTIDE SEQUENCE [GENOMIC DNA]</scope>
    <source>
        <strain>DSM 20267 / Isolate C2A</strain>
    </source>
</reference>
<dbReference type="EMBL" id="X84332">
    <property type="protein sequence ID" value="CAA59071.1"/>
    <property type="molecule type" value="Genomic_DNA"/>
</dbReference>
<dbReference type="RefSeq" id="WP_042362616.1">
    <property type="nucleotide sequence ID" value="NZ_CABIVW010000016.1"/>
</dbReference>
<dbReference type="SMR" id="Q56200"/>
<dbReference type="STRING" id="1288.AWC37_05625"/>
<dbReference type="GeneID" id="45496915"/>
<dbReference type="eggNOG" id="COG0011">
    <property type="taxonomic scope" value="Bacteria"/>
</dbReference>
<dbReference type="OrthoDB" id="2147383at2"/>
<dbReference type="GO" id="GO:0005829">
    <property type="term" value="C:cytosol"/>
    <property type="evidence" value="ECO:0007669"/>
    <property type="project" value="TreeGrafter"/>
</dbReference>
<dbReference type="Gene3D" id="3.30.70.930">
    <property type="match status" value="1"/>
</dbReference>
<dbReference type="InterPro" id="IPR029756">
    <property type="entry name" value="MTH1187/YkoF-like"/>
</dbReference>
<dbReference type="InterPro" id="IPR002767">
    <property type="entry name" value="Thiamine_BP"/>
</dbReference>
<dbReference type="InterPro" id="IPR051614">
    <property type="entry name" value="UPF0045_domain"/>
</dbReference>
<dbReference type="NCBIfam" id="TIGR00106">
    <property type="entry name" value="MTH1187 family thiamine-binding protein"/>
    <property type="match status" value="1"/>
</dbReference>
<dbReference type="PANTHER" id="PTHR33777">
    <property type="entry name" value="UPF0045 PROTEIN ECM15"/>
    <property type="match status" value="1"/>
</dbReference>
<dbReference type="PANTHER" id="PTHR33777:SF1">
    <property type="entry name" value="UPF0045 PROTEIN ECM15"/>
    <property type="match status" value="1"/>
</dbReference>
<dbReference type="Pfam" id="PF01910">
    <property type="entry name" value="Thiamine_BP"/>
    <property type="match status" value="1"/>
</dbReference>
<dbReference type="SUPFAM" id="SSF89957">
    <property type="entry name" value="MTH1187/YkoF-like"/>
    <property type="match status" value="1"/>
</dbReference>
<comment type="similarity">
    <text evidence="1">Belongs to the UPF0045 family.</text>
</comment>
<protein>
    <recommendedName>
        <fullName>UPF0045 protein in glkA 3'region</fullName>
    </recommendedName>
    <alternativeName>
        <fullName>ORF2</fullName>
    </alternativeName>
</protein>
<accession>Q56200</accession>
<name>DGLA_STAXY</name>
<gene>
    <name type="primary">dglA</name>
</gene>